<dbReference type="EC" id="4.2.1.-" evidence="1"/>
<dbReference type="EMBL" id="CP000721">
    <property type="protein sequence ID" value="ABR34911.1"/>
    <property type="molecule type" value="Genomic_DNA"/>
</dbReference>
<dbReference type="RefSeq" id="WP_012058966.1">
    <property type="nucleotide sequence ID" value="NC_009617.1"/>
</dbReference>
<dbReference type="SMR" id="A6LX31"/>
<dbReference type="KEGG" id="cbe:Cbei_2760"/>
<dbReference type="eggNOG" id="COG4336">
    <property type="taxonomic scope" value="Bacteria"/>
</dbReference>
<dbReference type="HOGENOM" id="CLU_059759_0_0_9"/>
<dbReference type="Proteomes" id="UP000000565">
    <property type="component" value="Chromosome"/>
</dbReference>
<dbReference type="GO" id="GO:0016829">
    <property type="term" value="F:lyase activity"/>
    <property type="evidence" value="ECO:0007669"/>
    <property type="project" value="UniProtKB-KW"/>
</dbReference>
<dbReference type="FunFam" id="3.30.2040.10:FF:000001">
    <property type="entry name" value="D-glutamate cyclase, mitochondrial"/>
    <property type="match status" value="1"/>
</dbReference>
<dbReference type="Gene3D" id="3.40.1640.10">
    <property type="entry name" value="PSTPO5379-like"/>
    <property type="match status" value="1"/>
</dbReference>
<dbReference type="Gene3D" id="3.30.2040.10">
    <property type="entry name" value="PSTPO5379-like domain"/>
    <property type="match status" value="1"/>
</dbReference>
<dbReference type="HAMAP" id="MF_01830">
    <property type="entry name" value="Hydro_lyase"/>
    <property type="match status" value="1"/>
</dbReference>
<dbReference type="InterPro" id="IPR009906">
    <property type="entry name" value="D-Glu_cyclase"/>
</dbReference>
<dbReference type="InterPro" id="IPR038021">
    <property type="entry name" value="Putative_hydro-lyase"/>
</dbReference>
<dbReference type="InterPro" id="IPR016938">
    <property type="entry name" value="UPF0317"/>
</dbReference>
<dbReference type="NCBIfam" id="NF003969">
    <property type="entry name" value="PRK05463.1"/>
    <property type="match status" value="1"/>
</dbReference>
<dbReference type="PANTHER" id="PTHR32022">
    <property type="entry name" value="D-GLUTAMATE CYCLASE, MITOCHONDRIAL"/>
    <property type="match status" value="1"/>
</dbReference>
<dbReference type="PANTHER" id="PTHR32022:SF10">
    <property type="entry name" value="D-GLUTAMATE CYCLASE, MITOCHONDRIAL"/>
    <property type="match status" value="1"/>
</dbReference>
<dbReference type="Pfam" id="PF07286">
    <property type="entry name" value="D-Glu_cyclase"/>
    <property type="match status" value="1"/>
</dbReference>
<dbReference type="PIRSF" id="PIRSF029755">
    <property type="entry name" value="UCP029755"/>
    <property type="match status" value="1"/>
</dbReference>
<dbReference type="SUPFAM" id="SSF160920">
    <property type="entry name" value="PSTPO5379-like"/>
    <property type="match status" value="1"/>
</dbReference>
<organism>
    <name type="scientific">Clostridium beijerinckii (strain ATCC 51743 / NCIMB 8052)</name>
    <name type="common">Clostridium acetobutylicum</name>
    <dbReference type="NCBI Taxonomy" id="290402"/>
    <lineage>
        <taxon>Bacteria</taxon>
        <taxon>Bacillati</taxon>
        <taxon>Bacillota</taxon>
        <taxon>Clostridia</taxon>
        <taxon>Eubacteriales</taxon>
        <taxon>Clostridiaceae</taxon>
        <taxon>Clostridium</taxon>
    </lineage>
</organism>
<protein>
    <recommendedName>
        <fullName evidence="1">Putative hydro-lyase Cbei_2760</fullName>
        <ecNumber evidence="1">4.2.1.-</ecNumber>
    </recommendedName>
</protein>
<comment type="similarity">
    <text evidence="1">Belongs to the D-glutamate cyclase family.</text>
</comment>
<keyword id="KW-0456">Lyase</keyword>
<name>Y2760_CLOB8</name>
<evidence type="ECO:0000255" key="1">
    <source>
        <dbReference type="HAMAP-Rule" id="MF_01830"/>
    </source>
</evidence>
<feature type="chain" id="PRO_0000379832" description="Putative hydro-lyase Cbei_2760">
    <location>
        <begin position="1"/>
        <end position="262"/>
    </location>
</feature>
<sequence>MDYSKMKPSEVRNLIREGKITGPTSGMCAGYAQANLVILPKELAYDFLLFSQRNPKACPILEVSDVGSRSLRYIAEDADIAKDIPKYRVYEDGILTGEYTSVEHLWRDDFVSFLIGCSFSFESELLEAGVPVRHIEENCNVPMFITNIECEPAGIFNGKMVVSMRPIPYDQIVKSVMVTGAMPKVHGTPIHIGEPSVIGISDISKPDFGDSVNIKEGEVPVFWPCGVTPQSVVMNVKPKIVITHSPGHMLITDTKNIDIKFS</sequence>
<proteinExistence type="inferred from homology"/>
<reference key="1">
    <citation type="submission" date="2007-06" db="EMBL/GenBank/DDBJ databases">
        <title>Complete sequence of Clostridium beijerinckii NCIMB 8052.</title>
        <authorList>
            <consortium name="US DOE Joint Genome Institute"/>
            <person name="Copeland A."/>
            <person name="Lucas S."/>
            <person name="Lapidus A."/>
            <person name="Barry K."/>
            <person name="Detter J.C."/>
            <person name="Glavina del Rio T."/>
            <person name="Hammon N."/>
            <person name="Israni S."/>
            <person name="Dalin E."/>
            <person name="Tice H."/>
            <person name="Pitluck S."/>
            <person name="Sims D."/>
            <person name="Brettin T."/>
            <person name="Bruce D."/>
            <person name="Tapia R."/>
            <person name="Brainard J."/>
            <person name="Schmutz J."/>
            <person name="Larimer F."/>
            <person name="Land M."/>
            <person name="Hauser L."/>
            <person name="Kyrpides N."/>
            <person name="Mikhailova N."/>
            <person name="Bennet G."/>
            <person name="Cann I."/>
            <person name="Chen J.-S."/>
            <person name="Contreras A.L."/>
            <person name="Jones D."/>
            <person name="Kashket E."/>
            <person name="Mitchell W."/>
            <person name="Stoddard S."/>
            <person name="Schwarz W."/>
            <person name="Qureshi N."/>
            <person name="Young M."/>
            <person name="Shi Z."/>
            <person name="Ezeji T."/>
            <person name="White B."/>
            <person name="Blaschek H."/>
            <person name="Richardson P."/>
        </authorList>
    </citation>
    <scope>NUCLEOTIDE SEQUENCE [LARGE SCALE GENOMIC DNA]</scope>
    <source>
        <strain>ATCC 51743 / NCIMB 8052</strain>
    </source>
</reference>
<accession>A6LX31</accession>
<gene>
    <name type="ordered locus">Cbei_2760</name>
</gene>